<dbReference type="EC" id="2.1.1.163" evidence="1"/>
<dbReference type="EMBL" id="AL596170">
    <property type="protein sequence ID" value="CAC97275.1"/>
    <property type="molecule type" value="Genomic_DNA"/>
</dbReference>
<dbReference type="PIR" id="AC1688">
    <property type="entry name" value="AC1688"/>
</dbReference>
<dbReference type="RefSeq" id="WP_003726790.1">
    <property type="nucleotide sequence ID" value="NC_003212.1"/>
</dbReference>
<dbReference type="SMR" id="P67056"/>
<dbReference type="STRING" id="272626.gene:17566403"/>
<dbReference type="GeneID" id="93239845"/>
<dbReference type="KEGG" id="lin:menH"/>
<dbReference type="eggNOG" id="COG2226">
    <property type="taxonomic scope" value="Bacteria"/>
</dbReference>
<dbReference type="HOGENOM" id="CLU_037990_0_0_9"/>
<dbReference type="OrthoDB" id="9808140at2"/>
<dbReference type="UniPathway" id="UPA00079">
    <property type="reaction ID" value="UER00169"/>
</dbReference>
<dbReference type="Proteomes" id="UP000002513">
    <property type="component" value="Chromosome"/>
</dbReference>
<dbReference type="GO" id="GO:0043770">
    <property type="term" value="F:demethylmenaquinone methyltransferase activity"/>
    <property type="evidence" value="ECO:0007669"/>
    <property type="project" value="UniProtKB-UniRule"/>
</dbReference>
<dbReference type="GO" id="GO:0009234">
    <property type="term" value="P:menaquinone biosynthetic process"/>
    <property type="evidence" value="ECO:0007669"/>
    <property type="project" value="UniProtKB-UniRule"/>
</dbReference>
<dbReference type="GO" id="GO:0032259">
    <property type="term" value="P:methylation"/>
    <property type="evidence" value="ECO:0007669"/>
    <property type="project" value="UniProtKB-KW"/>
</dbReference>
<dbReference type="CDD" id="cd02440">
    <property type="entry name" value="AdoMet_MTases"/>
    <property type="match status" value="1"/>
</dbReference>
<dbReference type="FunFam" id="3.40.50.150:FF:000086">
    <property type="entry name" value="Demethylmenaquinone methyltransferase"/>
    <property type="match status" value="1"/>
</dbReference>
<dbReference type="Gene3D" id="3.40.50.150">
    <property type="entry name" value="Vaccinia Virus protein VP39"/>
    <property type="match status" value="1"/>
</dbReference>
<dbReference type="HAMAP" id="MF_01813">
    <property type="entry name" value="MenG_UbiE_methyltr"/>
    <property type="match status" value="1"/>
</dbReference>
<dbReference type="InterPro" id="IPR014122">
    <property type="entry name" value="MenG_heptapren"/>
</dbReference>
<dbReference type="InterPro" id="IPR029063">
    <property type="entry name" value="SAM-dependent_MTases_sf"/>
</dbReference>
<dbReference type="InterPro" id="IPR004033">
    <property type="entry name" value="UbiE/COQ5_MeTrFase"/>
</dbReference>
<dbReference type="InterPro" id="IPR023576">
    <property type="entry name" value="UbiE/COQ5_MeTrFase_CS"/>
</dbReference>
<dbReference type="NCBIfam" id="TIGR02752">
    <property type="entry name" value="MenG_heptapren"/>
    <property type="match status" value="1"/>
</dbReference>
<dbReference type="NCBIfam" id="TIGR01934">
    <property type="entry name" value="MenG_MenH_UbiE"/>
    <property type="match status" value="1"/>
</dbReference>
<dbReference type="NCBIfam" id="NF001243">
    <property type="entry name" value="PRK00216.1-4"/>
    <property type="match status" value="1"/>
</dbReference>
<dbReference type="NCBIfam" id="NF001244">
    <property type="entry name" value="PRK00216.1-5"/>
    <property type="match status" value="1"/>
</dbReference>
<dbReference type="PANTHER" id="PTHR43591:SF24">
    <property type="entry name" value="2-METHOXY-6-POLYPRENYL-1,4-BENZOQUINOL METHYLASE, MITOCHONDRIAL"/>
    <property type="match status" value="1"/>
</dbReference>
<dbReference type="PANTHER" id="PTHR43591">
    <property type="entry name" value="METHYLTRANSFERASE"/>
    <property type="match status" value="1"/>
</dbReference>
<dbReference type="Pfam" id="PF01209">
    <property type="entry name" value="Ubie_methyltran"/>
    <property type="match status" value="1"/>
</dbReference>
<dbReference type="SUPFAM" id="SSF53335">
    <property type="entry name" value="S-adenosyl-L-methionine-dependent methyltransferases"/>
    <property type="match status" value="1"/>
</dbReference>
<dbReference type="PROSITE" id="PS51608">
    <property type="entry name" value="SAM_MT_UBIE"/>
    <property type="match status" value="1"/>
</dbReference>
<dbReference type="PROSITE" id="PS01183">
    <property type="entry name" value="UBIE_1"/>
    <property type="match status" value="1"/>
</dbReference>
<dbReference type="PROSITE" id="PS01184">
    <property type="entry name" value="UBIE_2"/>
    <property type="match status" value="1"/>
</dbReference>
<comment type="function">
    <text evidence="1">Methyltransferase required for the conversion of demethylmenaquinol (DMKH2) to menaquinol (MKH2).</text>
</comment>
<comment type="catalytic activity">
    <reaction evidence="1">
        <text>a 2-demethylmenaquinol + S-adenosyl-L-methionine = a menaquinol + S-adenosyl-L-homocysteine + H(+)</text>
        <dbReference type="Rhea" id="RHEA:42640"/>
        <dbReference type="Rhea" id="RHEA-COMP:9539"/>
        <dbReference type="Rhea" id="RHEA-COMP:9563"/>
        <dbReference type="ChEBI" id="CHEBI:15378"/>
        <dbReference type="ChEBI" id="CHEBI:18151"/>
        <dbReference type="ChEBI" id="CHEBI:55437"/>
        <dbReference type="ChEBI" id="CHEBI:57856"/>
        <dbReference type="ChEBI" id="CHEBI:59789"/>
        <dbReference type="EC" id="2.1.1.163"/>
    </reaction>
</comment>
<comment type="pathway">
    <text evidence="1">Quinol/quinone metabolism; menaquinone biosynthesis; menaquinol from 1,4-dihydroxy-2-naphthoate: step 2/2.</text>
</comment>
<comment type="similarity">
    <text evidence="1">Belongs to the class I-like SAM-binding methyltransferase superfamily. MenG/UbiE family.</text>
</comment>
<evidence type="ECO:0000255" key="1">
    <source>
        <dbReference type="HAMAP-Rule" id="MF_01813"/>
    </source>
</evidence>
<sequence>MTETKEEKVHKVFEKISPSYDRMNSVISFKLHVKWRKETMKLMRVQKGTNVLDVCCGTADWSIMMAEEIGPEGHVTGLDFSENMLKVGREKVKEADLHNVELIHGNAMELPFPDNSFDYVTIGFGLRNVPDYMQVLREMYRVLKPGGQLACIDTSQPNIPGWKQVFNAYFRYVMPVFGKFFAKSYKEYSWLQESTREFPGMARLAEMFQEAGFSYVRYISHSGGASATHFGFKKKEQ</sequence>
<protein>
    <recommendedName>
        <fullName evidence="1">Demethylmenaquinone methyltransferase</fullName>
        <ecNumber evidence="1">2.1.1.163</ecNumber>
    </recommendedName>
</protein>
<name>MENG_LISIN</name>
<reference key="1">
    <citation type="journal article" date="2001" name="Science">
        <title>Comparative genomics of Listeria species.</title>
        <authorList>
            <person name="Glaser P."/>
            <person name="Frangeul L."/>
            <person name="Buchrieser C."/>
            <person name="Rusniok C."/>
            <person name="Amend A."/>
            <person name="Baquero F."/>
            <person name="Berche P."/>
            <person name="Bloecker H."/>
            <person name="Brandt P."/>
            <person name="Chakraborty T."/>
            <person name="Charbit A."/>
            <person name="Chetouani F."/>
            <person name="Couve E."/>
            <person name="de Daruvar A."/>
            <person name="Dehoux P."/>
            <person name="Domann E."/>
            <person name="Dominguez-Bernal G."/>
            <person name="Duchaud E."/>
            <person name="Durant L."/>
            <person name="Dussurget O."/>
            <person name="Entian K.-D."/>
            <person name="Fsihi H."/>
            <person name="Garcia-del Portillo F."/>
            <person name="Garrido P."/>
            <person name="Gautier L."/>
            <person name="Goebel W."/>
            <person name="Gomez-Lopez N."/>
            <person name="Hain T."/>
            <person name="Hauf J."/>
            <person name="Jackson D."/>
            <person name="Jones L.-M."/>
            <person name="Kaerst U."/>
            <person name="Kreft J."/>
            <person name="Kuhn M."/>
            <person name="Kunst F."/>
            <person name="Kurapkat G."/>
            <person name="Madueno E."/>
            <person name="Maitournam A."/>
            <person name="Mata Vicente J."/>
            <person name="Ng E."/>
            <person name="Nedjari H."/>
            <person name="Nordsiek G."/>
            <person name="Novella S."/>
            <person name="de Pablos B."/>
            <person name="Perez-Diaz J.-C."/>
            <person name="Purcell R."/>
            <person name="Remmel B."/>
            <person name="Rose M."/>
            <person name="Schlueter T."/>
            <person name="Simoes N."/>
            <person name="Tierrez A."/>
            <person name="Vazquez-Boland J.-A."/>
            <person name="Voss H."/>
            <person name="Wehland J."/>
            <person name="Cossart P."/>
        </authorList>
    </citation>
    <scope>NUCLEOTIDE SEQUENCE [LARGE SCALE GENOMIC DNA]</scope>
    <source>
        <strain>ATCC BAA-680 / CLIP 11262</strain>
    </source>
</reference>
<keyword id="KW-0474">Menaquinone biosynthesis</keyword>
<keyword id="KW-0489">Methyltransferase</keyword>
<keyword id="KW-0949">S-adenosyl-L-methionine</keyword>
<keyword id="KW-0808">Transferase</keyword>
<gene>
    <name evidence="1" type="primary">menG</name>
    <name type="ordered locus">lin2045</name>
</gene>
<accession>P67056</accession>
<accession>Q92A77</accession>
<organism>
    <name type="scientific">Listeria innocua serovar 6a (strain ATCC BAA-680 / CLIP 11262)</name>
    <dbReference type="NCBI Taxonomy" id="272626"/>
    <lineage>
        <taxon>Bacteria</taxon>
        <taxon>Bacillati</taxon>
        <taxon>Bacillota</taxon>
        <taxon>Bacilli</taxon>
        <taxon>Bacillales</taxon>
        <taxon>Listeriaceae</taxon>
        <taxon>Listeria</taxon>
    </lineage>
</organism>
<proteinExistence type="inferred from homology"/>
<feature type="chain" id="PRO_0000193291" description="Demethylmenaquinone methyltransferase">
    <location>
        <begin position="1"/>
        <end position="237"/>
    </location>
</feature>
<feature type="binding site" evidence="1">
    <location>
        <position position="58"/>
    </location>
    <ligand>
        <name>S-adenosyl-L-methionine</name>
        <dbReference type="ChEBI" id="CHEBI:59789"/>
    </ligand>
</feature>
<feature type="binding site" evidence="1">
    <location>
        <position position="79"/>
    </location>
    <ligand>
        <name>S-adenosyl-L-methionine</name>
        <dbReference type="ChEBI" id="CHEBI:59789"/>
    </ligand>
</feature>
<feature type="binding site" evidence="1">
    <location>
        <begin position="106"/>
        <end position="107"/>
    </location>
    <ligand>
        <name>S-adenosyl-L-methionine</name>
        <dbReference type="ChEBI" id="CHEBI:59789"/>
    </ligand>
</feature>